<reference key="1">
    <citation type="journal article" date="2007" name="Nat. Biotechnol.">
        <title>Genome sequencing and analysis of the versatile cell factory Aspergillus niger CBS 513.88.</title>
        <authorList>
            <person name="Pel H.J."/>
            <person name="de Winde J.H."/>
            <person name="Archer D.B."/>
            <person name="Dyer P.S."/>
            <person name="Hofmann G."/>
            <person name="Schaap P.J."/>
            <person name="Turner G."/>
            <person name="de Vries R.P."/>
            <person name="Albang R."/>
            <person name="Albermann K."/>
            <person name="Andersen M.R."/>
            <person name="Bendtsen J.D."/>
            <person name="Benen J.A.E."/>
            <person name="van den Berg M."/>
            <person name="Breestraat S."/>
            <person name="Caddick M.X."/>
            <person name="Contreras R."/>
            <person name="Cornell M."/>
            <person name="Coutinho P.M."/>
            <person name="Danchin E.G.J."/>
            <person name="Debets A.J.M."/>
            <person name="Dekker P."/>
            <person name="van Dijck P.W.M."/>
            <person name="van Dijk A."/>
            <person name="Dijkhuizen L."/>
            <person name="Driessen A.J.M."/>
            <person name="d'Enfert C."/>
            <person name="Geysens S."/>
            <person name="Goosen C."/>
            <person name="Groot G.S.P."/>
            <person name="de Groot P.W.J."/>
            <person name="Guillemette T."/>
            <person name="Henrissat B."/>
            <person name="Herweijer M."/>
            <person name="van den Hombergh J.P.T.W."/>
            <person name="van den Hondel C.A.M.J.J."/>
            <person name="van der Heijden R.T.J.M."/>
            <person name="van der Kaaij R.M."/>
            <person name="Klis F.M."/>
            <person name="Kools H.J."/>
            <person name="Kubicek C.P."/>
            <person name="van Kuyk P.A."/>
            <person name="Lauber J."/>
            <person name="Lu X."/>
            <person name="van der Maarel M.J.E.C."/>
            <person name="Meulenberg R."/>
            <person name="Menke H."/>
            <person name="Mortimer M.A."/>
            <person name="Nielsen J."/>
            <person name="Oliver S.G."/>
            <person name="Olsthoorn M."/>
            <person name="Pal K."/>
            <person name="van Peij N.N.M.E."/>
            <person name="Ram A.F.J."/>
            <person name="Rinas U."/>
            <person name="Roubos J.A."/>
            <person name="Sagt C.M.J."/>
            <person name="Schmoll M."/>
            <person name="Sun J."/>
            <person name="Ussery D."/>
            <person name="Varga J."/>
            <person name="Vervecken W."/>
            <person name="van de Vondervoort P.J.J."/>
            <person name="Wedler H."/>
            <person name="Woesten H.A.B."/>
            <person name="Zeng A.-P."/>
            <person name="van Ooyen A.J.J."/>
            <person name="Visser J."/>
            <person name="Stam H."/>
        </authorList>
    </citation>
    <scope>NUCLEOTIDE SEQUENCE [LARGE SCALE GENOMIC DNA]</scope>
    <source>
        <strain>ATCC MYA-4892 / CBS 513.88 / FGSC A1513</strain>
    </source>
</reference>
<reference key="2">
    <citation type="journal article" date="2023" name="Appl. Microbiol. Biotechnol.">
        <title>Delineation of the CYP505E subfamily of fungal self-sufficient in-chain hydroxylating cytochrome P450 monooxygenases.</title>
        <authorList>
            <person name="Smit M.S."/>
            <person name="Maseme M.J."/>
            <person name="van Marwijk J."/>
            <person name="Aschenbrenner J.C."/>
            <person name="Opperman D.J."/>
        </authorList>
    </citation>
    <scope>FUNCTION</scope>
    <scope>CATALYTIC ACTIVITY</scope>
</reference>
<protein>
    <recommendedName>
        <fullName evidence="7">Self-sufficient cytochrome P450 monooxygenase CYP505E1</fullName>
    </recommendedName>
    <alternativeName>
        <fullName evidence="7">Bifunctional cytochrome P450/NADPH--P450 reductase CYP505E1</fullName>
    </alternativeName>
    <domain>
        <recommendedName>
            <fullName evidence="7">Cytochrome P450 monooxygenase</fullName>
            <ecNumber evidence="6">1.14.14.1</ecNumber>
        </recommendedName>
    </domain>
    <domain>
        <recommendedName>
            <fullName evidence="7">NADPH--cytochrome P450 reductase</fullName>
            <ecNumber evidence="6">1.6.2.4</ecNumber>
        </recommendedName>
    </domain>
</protein>
<dbReference type="EC" id="1.14.14.1" evidence="6"/>
<dbReference type="EC" id="1.6.2.4" evidence="6"/>
<dbReference type="EMBL" id="AM270117">
    <property type="protein sequence ID" value="CAK39220.1"/>
    <property type="molecule type" value="Genomic_DNA"/>
</dbReference>
<dbReference type="RefSeq" id="XP_001391074.2">
    <property type="nucleotide sequence ID" value="XM_001391037.2"/>
</dbReference>
<dbReference type="SMR" id="A2QLV1"/>
<dbReference type="EnsemblFungi" id="CAK39220">
    <property type="protein sequence ID" value="CAK39220"/>
    <property type="gene ID" value="An06g02530"/>
</dbReference>
<dbReference type="GeneID" id="4981252"/>
<dbReference type="KEGG" id="ang:An06g02530"/>
<dbReference type="VEuPathDB" id="FungiDB:An06g02530"/>
<dbReference type="HOGENOM" id="CLU_001570_7_0_1"/>
<dbReference type="Proteomes" id="UP000006706">
    <property type="component" value="Chromosome 8ER"/>
</dbReference>
<dbReference type="GO" id="GO:0005829">
    <property type="term" value="C:cytosol"/>
    <property type="evidence" value="ECO:0007669"/>
    <property type="project" value="TreeGrafter"/>
</dbReference>
<dbReference type="GO" id="GO:0070330">
    <property type="term" value="F:aromatase activity"/>
    <property type="evidence" value="ECO:0007669"/>
    <property type="project" value="InterPro"/>
</dbReference>
<dbReference type="GO" id="GO:0050660">
    <property type="term" value="F:flavin adenine dinucleotide binding"/>
    <property type="evidence" value="ECO:0007669"/>
    <property type="project" value="TreeGrafter"/>
</dbReference>
<dbReference type="GO" id="GO:0010181">
    <property type="term" value="F:FMN binding"/>
    <property type="evidence" value="ECO:0007669"/>
    <property type="project" value="InterPro"/>
</dbReference>
<dbReference type="GO" id="GO:0020037">
    <property type="term" value="F:heme binding"/>
    <property type="evidence" value="ECO:0007669"/>
    <property type="project" value="InterPro"/>
</dbReference>
<dbReference type="GO" id="GO:0005506">
    <property type="term" value="F:iron ion binding"/>
    <property type="evidence" value="ECO:0007669"/>
    <property type="project" value="InterPro"/>
</dbReference>
<dbReference type="GO" id="GO:0003958">
    <property type="term" value="F:NADPH-hemoprotein reductase activity"/>
    <property type="evidence" value="ECO:0007669"/>
    <property type="project" value="UniProtKB-EC"/>
</dbReference>
<dbReference type="CDD" id="cd06206">
    <property type="entry name" value="bifunctional_CYPOR"/>
    <property type="match status" value="1"/>
</dbReference>
<dbReference type="CDD" id="cd11068">
    <property type="entry name" value="CYP120A1"/>
    <property type="match status" value="1"/>
</dbReference>
<dbReference type="FunFam" id="1.10.630.10:FF:000040">
    <property type="entry name" value="Bifunctional cytochrome P450/NADPH--P450 reductase"/>
    <property type="match status" value="1"/>
</dbReference>
<dbReference type="Gene3D" id="3.40.50.360">
    <property type="match status" value="1"/>
</dbReference>
<dbReference type="Gene3D" id="1.10.630.10">
    <property type="entry name" value="Cytochrome P450"/>
    <property type="match status" value="1"/>
</dbReference>
<dbReference type="Gene3D" id="1.20.990.10">
    <property type="entry name" value="NADPH-cytochrome p450 Reductase, Chain A, domain 3"/>
    <property type="match status" value="1"/>
</dbReference>
<dbReference type="Gene3D" id="3.40.50.80">
    <property type="entry name" value="Nucleotide-binding domain of ferredoxin-NADP reductase (FNR) module"/>
    <property type="match status" value="1"/>
</dbReference>
<dbReference type="Gene3D" id="2.40.30.10">
    <property type="entry name" value="Translation factors"/>
    <property type="match status" value="1"/>
</dbReference>
<dbReference type="InterPro" id="IPR023206">
    <property type="entry name" value="Bifunctional_P450_P450_red"/>
</dbReference>
<dbReference type="InterPro" id="IPR003097">
    <property type="entry name" value="CysJ-like_FAD-binding"/>
</dbReference>
<dbReference type="InterPro" id="IPR001128">
    <property type="entry name" value="Cyt_P450"/>
</dbReference>
<dbReference type="InterPro" id="IPR017972">
    <property type="entry name" value="Cyt_P450_CS"/>
</dbReference>
<dbReference type="InterPro" id="IPR002401">
    <property type="entry name" value="Cyt_P450_E_grp-I"/>
</dbReference>
<dbReference type="InterPro" id="IPR036396">
    <property type="entry name" value="Cyt_P450_sf"/>
</dbReference>
<dbReference type="InterPro" id="IPR017927">
    <property type="entry name" value="FAD-bd_FR_type"/>
</dbReference>
<dbReference type="InterPro" id="IPR008254">
    <property type="entry name" value="Flavodoxin/NO_synth"/>
</dbReference>
<dbReference type="InterPro" id="IPR029039">
    <property type="entry name" value="Flavoprotein-like_sf"/>
</dbReference>
<dbReference type="InterPro" id="IPR039261">
    <property type="entry name" value="FNR_nucleotide-bd"/>
</dbReference>
<dbReference type="InterPro" id="IPR023173">
    <property type="entry name" value="NADPH_Cyt_P450_Rdtase_alpha"/>
</dbReference>
<dbReference type="InterPro" id="IPR001433">
    <property type="entry name" value="OxRdtase_FAD/NAD-bd"/>
</dbReference>
<dbReference type="InterPro" id="IPR017938">
    <property type="entry name" value="Riboflavin_synthase-like_b-brl"/>
</dbReference>
<dbReference type="PANTHER" id="PTHR19384:SF127">
    <property type="entry name" value="BIFUNCTIONAL CYTOCHROME P450_NADPH--P450 REDUCTASE"/>
    <property type="match status" value="1"/>
</dbReference>
<dbReference type="PANTHER" id="PTHR19384">
    <property type="entry name" value="NITRIC OXIDE SYNTHASE-RELATED"/>
    <property type="match status" value="1"/>
</dbReference>
<dbReference type="Pfam" id="PF00667">
    <property type="entry name" value="FAD_binding_1"/>
    <property type="match status" value="1"/>
</dbReference>
<dbReference type="Pfam" id="PF00258">
    <property type="entry name" value="Flavodoxin_1"/>
    <property type="match status" value="1"/>
</dbReference>
<dbReference type="Pfam" id="PF00175">
    <property type="entry name" value="NAD_binding_1"/>
    <property type="match status" value="1"/>
</dbReference>
<dbReference type="Pfam" id="PF00067">
    <property type="entry name" value="p450"/>
    <property type="match status" value="1"/>
</dbReference>
<dbReference type="PIRSF" id="PIRSF000209">
    <property type="entry name" value="Bifunctional_P450_P450R"/>
    <property type="match status" value="1"/>
</dbReference>
<dbReference type="PRINTS" id="PR00463">
    <property type="entry name" value="EP450I"/>
</dbReference>
<dbReference type="PRINTS" id="PR00385">
    <property type="entry name" value="P450"/>
</dbReference>
<dbReference type="SUPFAM" id="SSF48264">
    <property type="entry name" value="Cytochrome P450"/>
    <property type="match status" value="1"/>
</dbReference>
<dbReference type="SUPFAM" id="SSF52343">
    <property type="entry name" value="Ferredoxin reductase-like, C-terminal NADP-linked domain"/>
    <property type="match status" value="1"/>
</dbReference>
<dbReference type="SUPFAM" id="SSF52218">
    <property type="entry name" value="Flavoproteins"/>
    <property type="match status" value="1"/>
</dbReference>
<dbReference type="SUPFAM" id="SSF63380">
    <property type="entry name" value="Riboflavin synthase domain-like"/>
    <property type="match status" value="1"/>
</dbReference>
<dbReference type="PROSITE" id="PS00086">
    <property type="entry name" value="CYTOCHROME_P450"/>
    <property type="match status" value="1"/>
</dbReference>
<dbReference type="PROSITE" id="PS51384">
    <property type="entry name" value="FAD_FR"/>
    <property type="match status" value="1"/>
</dbReference>
<dbReference type="PROSITE" id="PS50902">
    <property type="entry name" value="FLAVODOXIN_LIKE"/>
    <property type="match status" value="1"/>
</dbReference>
<comment type="function">
    <text evidence="6">Self-sufficient cytochrome P450 monooxygenase that catalyzes the regioselective in-chain hydroxylation of alkanes, fatty alcohols, and fatty acids at the omega-7 position (PubMed:36607403). Performs hydroxylation of C10-C16 n-alkanes and C12 and C14 fatty alcohols; and thereby enables the one step biocatalytic synthesis of rare alcohols such as 5-dodecanol and 7-tetradecanol (PubMed:36607403). Converts 1-dodecanol into 1,5-dodecanediol as major product with very little sub-terminally hydroxylated products with the 1,4-dodecanediol and 1,6-dodecanediol more abundant (PubMed:36607403). Converts dodecanoic acid to 5-hydroxydodecanoic acid which can be further converted into delta-dodecalactone by lactonization of the 5-hydroxy acid at low pH (PubMed:36607403). Also gives sub-terminal hydroxylation of dodecanoic acid with 9-hydroxydodecanoic acid being the second most abundant product (PubMed:36607403).</text>
</comment>
<comment type="catalytic activity">
    <reaction evidence="3">
        <text>2 oxidized [cytochrome P450] + NADPH = 2 reduced [cytochrome P450] + NADP(+) + H(+)</text>
        <dbReference type="Rhea" id="RHEA:24040"/>
        <dbReference type="Rhea" id="RHEA-COMP:14627"/>
        <dbReference type="Rhea" id="RHEA-COMP:14628"/>
        <dbReference type="ChEBI" id="CHEBI:15378"/>
        <dbReference type="ChEBI" id="CHEBI:55376"/>
        <dbReference type="ChEBI" id="CHEBI:57783"/>
        <dbReference type="ChEBI" id="CHEBI:58349"/>
        <dbReference type="ChEBI" id="CHEBI:60344"/>
        <dbReference type="EC" id="1.6.2.4"/>
    </reaction>
</comment>
<comment type="catalytic activity">
    <reaction evidence="3">
        <text>an organic molecule + reduced [NADPH--hemoprotein reductase] + O2 = an alcohol + oxidized [NADPH--hemoprotein reductase] + H2O + H(+)</text>
        <dbReference type="Rhea" id="RHEA:17149"/>
        <dbReference type="Rhea" id="RHEA-COMP:11964"/>
        <dbReference type="Rhea" id="RHEA-COMP:11965"/>
        <dbReference type="ChEBI" id="CHEBI:15377"/>
        <dbReference type="ChEBI" id="CHEBI:15378"/>
        <dbReference type="ChEBI" id="CHEBI:15379"/>
        <dbReference type="ChEBI" id="CHEBI:30879"/>
        <dbReference type="ChEBI" id="CHEBI:57618"/>
        <dbReference type="ChEBI" id="CHEBI:58210"/>
        <dbReference type="ChEBI" id="CHEBI:142491"/>
        <dbReference type="EC" id="1.14.14.1"/>
    </reaction>
</comment>
<comment type="catalytic activity">
    <reaction evidence="6">
        <text>dodecanoate + reduced [NADPH--hemoprotein reductase] + O2 = 5-hydroxydodecanoate + oxidized [NADPH--hemoprotein reductase] + H2O + H(+)</text>
        <dbReference type="Rhea" id="RHEA:76723"/>
        <dbReference type="Rhea" id="RHEA-COMP:11964"/>
        <dbReference type="Rhea" id="RHEA-COMP:11965"/>
        <dbReference type="ChEBI" id="CHEBI:15377"/>
        <dbReference type="ChEBI" id="CHEBI:15378"/>
        <dbReference type="ChEBI" id="CHEBI:15379"/>
        <dbReference type="ChEBI" id="CHEBI:18262"/>
        <dbReference type="ChEBI" id="CHEBI:57618"/>
        <dbReference type="ChEBI" id="CHEBI:58210"/>
        <dbReference type="ChEBI" id="CHEBI:195418"/>
    </reaction>
    <physiologicalReaction direction="left-to-right" evidence="6">
        <dbReference type="Rhea" id="RHEA:76724"/>
    </physiologicalReaction>
</comment>
<comment type="catalytic activity">
    <reaction evidence="6">
        <text>tetradecanoate + reduced [NADPH--hemoprotein reductase] + O2 = 7-hydroxytetradecanoate + oxidized [NADPH--hemoprotein reductase] + H2O + H(+)</text>
        <dbReference type="Rhea" id="RHEA:76727"/>
        <dbReference type="Rhea" id="RHEA-COMP:11964"/>
        <dbReference type="Rhea" id="RHEA-COMP:11965"/>
        <dbReference type="ChEBI" id="CHEBI:15377"/>
        <dbReference type="ChEBI" id="CHEBI:15378"/>
        <dbReference type="ChEBI" id="CHEBI:15379"/>
        <dbReference type="ChEBI" id="CHEBI:30807"/>
        <dbReference type="ChEBI" id="CHEBI:57618"/>
        <dbReference type="ChEBI" id="CHEBI:58210"/>
        <dbReference type="ChEBI" id="CHEBI:195419"/>
    </reaction>
    <physiologicalReaction direction="left-to-right" evidence="6">
        <dbReference type="Rhea" id="RHEA:76728"/>
    </physiologicalReaction>
</comment>
<comment type="catalytic activity">
    <reaction evidence="6">
        <text>dodecan-1-ol + reduced [NADPH--hemoprotein reductase] + O2 = 1,5-dodecanediol + oxidized [NADPH--hemoprotein reductase] + H2O + H(+)</text>
        <dbReference type="Rhea" id="RHEA:76759"/>
        <dbReference type="Rhea" id="RHEA-COMP:11964"/>
        <dbReference type="Rhea" id="RHEA-COMP:11965"/>
        <dbReference type="ChEBI" id="CHEBI:15377"/>
        <dbReference type="ChEBI" id="CHEBI:15378"/>
        <dbReference type="ChEBI" id="CHEBI:15379"/>
        <dbReference type="ChEBI" id="CHEBI:28878"/>
        <dbReference type="ChEBI" id="CHEBI:57618"/>
        <dbReference type="ChEBI" id="CHEBI:58210"/>
        <dbReference type="ChEBI" id="CHEBI:195414"/>
    </reaction>
    <physiologicalReaction direction="left-to-right" evidence="6">
        <dbReference type="Rhea" id="RHEA:76760"/>
    </physiologicalReaction>
</comment>
<comment type="catalytic activity">
    <reaction evidence="6">
        <text>dodecan-1-ol + reduced [NADPH--hemoprotein reductase] + O2 = 1,4-dodecanediol + oxidized [NADPH--hemoprotein reductase] + H2O + H(+)</text>
        <dbReference type="Rhea" id="RHEA:76763"/>
        <dbReference type="Rhea" id="RHEA-COMP:11964"/>
        <dbReference type="Rhea" id="RHEA-COMP:11965"/>
        <dbReference type="ChEBI" id="CHEBI:15377"/>
        <dbReference type="ChEBI" id="CHEBI:15378"/>
        <dbReference type="ChEBI" id="CHEBI:15379"/>
        <dbReference type="ChEBI" id="CHEBI:28878"/>
        <dbReference type="ChEBI" id="CHEBI:57618"/>
        <dbReference type="ChEBI" id="CHEBI:58210"/>
        <dbReference type="ChEBI" id="CHEBI:195422"/>
    </reaction>
    <physiologicalReaction direction="left-to-right" evidence="6">
        <dbReference type="Rhea" id="RHEA:76764"/>
    </physiologicalReaction>
</comment>
<comment type="catalytic activity">
    <reaction evidence="6">
        <text>dodecan-1-ol + reduced [NADPH--hemoprotein reductase] + O2 = 1,6-dodecanediol + oxidized [NADPH--hemoprotein reductase] + H2O + H(+)</text>
        <dbReference type="Rhea" id="RHEA:76779"/>
        <dbReference type="Rhea" id="RHEA-COMP:11964"/>
        <dbReference type="Rhea" id="RHEA-COMP:11965"/>
        <dbReference type="ChEBI" id="CHEBI:15377"/>
        <dbReference type="ChEBI" id="CHEBI:15378"/>
        <dbReference type="ChEBI" id="CHEBI:15379"/>
        <dbReference type="ChEBI" id="CHEBI:28878"/>
        <dbReference type="ChEBI" id="CHEBI:57618"/>
        <dbReference type="ChEBI" id="CHEBI:58210"/>
        <dbReference type="ChEBI" id="CHEBI:195445"/>
    </reaction>
    <physiologicalReaction direction="left-to-right" evidence="6">
        <dbReference type="Rhea" id="RHEA:76780"/>
    </physiologicalReaction>
</comment>
<comment type="cofactor">
    <cofactor evidence="2">
        <name>FAD</name>
        <dbReference type="ChEBI" id="CHEBI:57692"/>
    </cofactor>
    <text evidence="2">Binds 1 FAD.</text>
</comment>
<comment type="cofactor">
    <cofactor evidence="2">
        <name>FMN</name>
        <dbReference type="ChEBI" id="CHEBI:58210"/>
    </cofactor>
    <text evidence="2">Binds 1 FMN.</text>
</comment>
<comment type="cofactor">
    <cofactor evidence="2">
        <name>heme</name>
        <dbReference type="ChEBI" id="CHEBI:30413"/>
    </cofactor>
</comment>
<comment type="similarity">
    <text evidence="8">In the N-terminal section; belongs to the cytochrome P450 family.</text>
</comment>
<name>CYPE1_ASPNC</name>
<feature type="chain" id="PRO_0000459036" description="Self-sufficient cytochrome P450 monooxygenase CYP505E1">
    <location>
        <begin position="1"/>
        <end position="1091"/>
    </location>
</feature>
<feature type="domain" description="Flavodoxin-like" evidence="4">
    <location>
        <begin position="528"/>
        <end position="669"/>
    </location>
</feature>
<feature type="domain" description="FAD-binding FR-type" evidence="5">
    <location>
        <begin position="707"/>
        <end position="935"/>
    </location>
</feature>
<feature type="binding site" description="axial binding residue" evidence="1">
    <location>
        <position position="433"/>
    </location>
    <ligand>
        <name>heme</name>
        <dbReference type="ChEBI" id="CHEBI:30413"/>
    </ligand>
    <ligandPart>
        <name>Fe</name>
        <dbReference type="ChEBI" id="CHEBI:18248"/>
    </ligandPart>
</feature>
<feature type="binding site" evidence="4">
    <location>
        <begin position="534"/>
        <end position="538"/>
    </location>
    <ligand>
        <name>FMN</name>
        <dbReference type="ChEBI" id="CHEBI:58210"/>
    </ligand>
</feature>
<feature type="binding site" evidence="4">
    <location>
        <begin position="613"/>
        <end position="645"/>
    </location>
    <ligand>
        <name>FMN</name>
        <dbReference type="ChEBI" id="CHEBI:58210"/>
    </ligand>
</feature>
<gene>
    <name evidence="7" type="primary">CYP505E1</name>
    <name type="ORF">An06g02530</name>
</gene>
<evidence type="ECO:0000250" key="1">
    <source>
        <dbReference type="UniProtKB" id="P14779"/>
    </source>
</evidence>
<evidence type="ECO:0000250" key="2">
    <source>
        <dbReference type="UniProtKB" id="Q9Y8G7"/>
    </source>
</evidence>
<evidence type="ECO:0000255" key="3">
    <source>
        <dbReference type="PIRNR" id="PIRNR000209"/>
    </source>
</evidence>
<evidence type="ECO:0000255" key="4">
    <source>
        <dbReference type="PROSITE-ProRule" id="PRU00088"/>
    </source>
</evidence>
<evidence type="ECO:0000255" key="5">
    <source>
        <dbReference type="PROSITE-ProRule" id="PRU00716"/>
    </source>
</evidence>
<evidence type="ECO:0000269" key="6">
    <source>
    </source>
</evidence>
<evidence type="ECO:0000303" key="7">
    <source>
    </source>
</evidence>
<evidence type="ECO:0000305" key="8"/>
<organism>
    <name type="scientific">Aspergillus niger (strain ATCC MYA-4892 / CBS 513.88 / FGSC A1513)</name>
    <dbReference type="NCBI Taxonomy" id="425011"/>
    <lineage>
        <taxon>Eukaryota</taxon>
        <taxon>Fungi</taxon>
        <taxon>Dikarya</taxon>
        <taxon>Ascomycota</taxon>
        <taxon>Pezizomycotina</taxon>
        <taxon>Eurotiomycetes</taxon>
        <taxon>Eurotiomycetidae</taxon>
        <taxon>Eurotiales</taxon>
        <taxon>Aspergillaceae</taxon>
        <taxon>Aspergillus</taxon>
        <taxon>Aspergillus subgen. Circumdati</taxon>
    </lineage>
</organism>
<proteinExistence type="evidence at protein level"/>
<keyword id="KW-0249">Electron transport</keyword>
<keyword id="KW-0274">FAD</keyword>
<keyword id="KW-0285">Flavoprotein</keyword>
<keyword id="KW-0288">FMN</keyword>
<keyword id="KW-0349">Heme</keyword>
<keyword id="KW-0408">Iron</keyword>
<keyword id="KW-0479">Metal-binding</keyword>
<keyword id="KW-0503">Monooxygenase</keyword>
<keyword id="KW-0521">NADP</keyword>
<keyword id="KW-0560">Oxidoreductase</keyword>
<keyword id="KW-1185">Reference proteome</keyword>
<keyword id="KW-0813">Transport</keyword>
<sequence>MSMLLGVRGTRDQSSYIGGRDYVFWQKEMRDAERIPGPTPLPVVGNLFDIDLEHVLQSVIGLANKYGPLFQITINGEKQIFATSQALVDELCDESRFHKAVASGLENLRMLAHDGLFTAYHGERGWGIAHRILVPAFGPLRIQSMFDDMGDLAQQLCLKWARQGASNSINITDDFTRLTLDTIALCTMDFRLNSFYNNDTMHPFVESMLYVLREADVQSALPGIANSVRIMAHRRMLKNIEAMRTIARDIIHDRRKKENPADDLLNTLLNGRDPVTGEGMSDESIIDNVITFLVAGHETTSGLLSFTFYYLVQHPDILKKAQKEVDETVGQAQISVQHLAELPYIDAILKESLRMMPTAPGFTVTPKKAETLGGKWLLNAGQPINVLLPACLRDRSIFGPNADEFSPGRMLAENFSKLPPNSWKPFGNGERSCIGRAFAWQEAQLVVAMILQNFDLVPDDPSYTLRIKETLTIKPDGFRVRATLRHRQTATGLFQHTLSARNDTSLASSSAHFIKKSEDQAPAGGRPICFFYGSNSGTCKALAHRLASDLMPYGFTDQKLAVLDTAVDNLPRDQPVIILTTTYDGQPTDDAKKFVAWLESGKVPALQGISYAVFGCGHHDWTQTFYRIPTLIDELMHKAGATRLAPRGTANAAVSDLFSDLEAWEETSLLPALRETFLLSSSSDLEPLNLHQLQISLSKPRRIDLHKDLMEARVTTVRILTNPDTPEKRHIEFRFQGDTTLRPGDHVNVLPVNPPSTVLRVLAQFNLAPDYSITINSFNTLGLPQATPVSASELFSAYVELSQPATRNNLRILAATAQSDEDKQELIHLQDSYDSLVRDKRVSVLDLLEQFPSVSLPIAAFISMLPALRLRTYSLSLAPSFKPSHGSLTFSVVNEPARNGNRRYLGVGSNYLASLTPGSILYLSPRPAKEAFHLPVDQSRIPIIMICAGSGLAPFLSFIQDRMIWQQQDKPLARALLFFGCGGRFLDDLYHEELSEFEAAGVVDVRRAYSKVLDYDMARGCKYVQDRLVAEANAIRHLWAQDATIYVCGSADMAKGVEGVLEKLLGMLPRERYVTEIYQMQTRDNVSEWLI</sequence>
<accession>A2QLV1</accession>